<comment type="function">
    <text evidence="1">May play a role in the immune response.</text>
</comment>
<comment type="subcellular location">
    <subcellularLocation>
        <location>Membrane</location>
        <topology>Single-pass type I membrane protein</topology>
    </subcellularLocation>
</comment>
<reference key="1">
    <citation type="journal article" date="2005" name="Science">
        <title>The transcriptional landscape of the mammalian genome.</title>
        <authorList>
            <person name="Carninci P."/>
            <person name="Kasukawa T."/>
            <person name="Katayama S."/>
            <person name="Gough J."/>
            <person name="Frith M.C."/>
            <person name="Maeda N."/>
            <person name="Oyama R."/>
            <person name="Ravasi T."/>
            <person name="Lenhard B."/>
            <person name="Wells C."/>
            <person name="Kodzius R."/>
            <person name="Shimokawa K."/>
            <person name="Bajic V.B."/>
            <person name="Brenner S.E."/>
            <person name="Batalov S."/>
            <person name="Forrest A.R."/>
            <person name="Zavolan M."/>
            <person name="Davis M.J."/>
            <person name="Wilming L.G."/>
            <person name="Aidinis V."/>
            <person name="Allen J.E."/>
            <person name="Ambesi-Impiombato A."/>
            <person name="Apweiler R."/>
            <person name="Aturaliya R.N."/>
            <person name="Bailey T.L."/>
            <person name="Bansal M."/>
            <person name="Baxter L."/>
            <person name="Beisel K.W."/>
            <person name="Bersano T."/>
            <person name="Bono H."/>
            <person name="Chalk A.M."/>
            <person name="Chiu K.P."/>
            <person name="Choudhary V."/>
            <person name="Christoffels A."/>
            <person name="Clutterbuck D.R."/>
            <person name="Crowe M.L."/>
            <person name="Dalla E."/>
            <person name="Dalrymple B.P."/>
            <person name="de Bono B."/>
            <person name="Della Gatta G."/>
            <person name="di Bernardo D."/>
            <person name="Down T."/>
            <person name="Engstrom P."/>
            <person name="Fagiolini M."/>
            <person name="Faulkner G."/>
            <person name="Fletcher C.F."/>
            <person name="Fukushima T."/>
            <person name="Furuno M."/>
            <person name="Futaki S."/>
            <person name="Gariboldi M."/>
            <person name="Georgii-Hemming P."/>
            <person name="Gingeras T.R."/>
            <person name="Gojobori T."/>
            <person name="Green R.E."/>
            <person name="Gustincich S."/>
            <person name="Harbers M."/>
            <person name="Hayashi Y."/>
            <person name="Hensch T.K."/>
            <person name="Hirokawa N."/>
            <person name="Hill D."/>
            <person name="Huminiecki L."/>
            <person name="Iacono M."/>
            <person name="Ikeo K."/>
            <person name="Iwama A."/>
            <person name="Ishikawa T."/>
            <person name="Jakt M."/>
            <person name="Kanapin A."/>
            <person name="Katoh M."/>
            <person name="Kawasawa Y."/>
            <person name="Kelso J."/>
            <person name="Kitamura H."/>
            <person name="Kitano H."/>
            <person name="Kollias G."/>
            <person name="Krishnan S.P."/>
            <person name="Kruger A."/>
            <person name="Kummerfeld S.K."/>
            <person name="Kurochkin I.V."/>
            <person name="Lareau L.F."/>
            <person name="Lazarevic D."/>
            <person name="Lipovich L."/>
            <person name="Liu J."/>
            <person name="Liuni S."/>
            <person name="McWilliam S."/>
            <person name="Madan Babu M."/>
            <person name="Madera M."/>
            <person name="Marchionni L."/>
            <person name="Matsuda H."/>
            <person name="Matsuzawa S."/>
            <person name="Miki H."/>
            <person name="Mignone F."/>
            <person name="Miyake S."/>
            <person name="Morris K."/>
            <person name="Mottagui-Tabar S."/>
            <person name="Mulder N."/>
            <person name="Nakano N."/>
            <person name="Nakauchi H."/>
            <person name="Ng P."/>
            <person name="Nilsson R."/>
            <person name="Nishiguchi S."/>
            <person name="Nishikawa S."/>
            <person name="Nori F."/>
            <person name="Ohara O."/>
            <person name="Okazaki Y."/>
            <person name="Orlando V."/>
            <person name="Pang K.C."/>
            <person name="Pavan W.J."/>
            <person name="Pavesi G."/>
            <person name="Pesole G."/>
            <person name="Petrovsky N."/>
            <person name="Piazza S."/>
            <person name="Reed J."/>
            <person name="Reid J.F."/>
            <person name="Ring B.Z."/>
            <person name="Ringwald M."/>
            <person name="Rost B."/>
            <person name="Ruan Y."/>
            <person name="Salzberg S.L."/>
            <person name="Sandelin A."/>
            <person name="Schneider C."/>
            <person name="Schoenbach C."/>
            <person name="Sekiguchi K."/>
            <person name="Semple C.A."/>
            <person name="Seno S."/>
            <person name="Sessa L."/>
            <person name="Sheng Y."/>
            <person name="Shibata Y."/>
            <person name="Shimada H."/>
            <person name="Shimada K."/>
            <person name="Silva D."/>
            <person name="Sinclair B."/>
            <person name="Sperling S."/>
            <person name="Stupka E."/>
            <person name="Sugiura K."/>
            <person name="Sultana R."/>
            <person name="Takenaka Y."/>
            <person name="Taki K."/>
            <person name="Tammoja K."/>
            <person name="Tan S.L."/>
            <person name="Tang S."/>
            <person name="Taylor M.S."/>
            <person name="Tegner J."/>
            <person name="Teichmann S.A."/>
            <person name="Ueda H.R."/>
            <person name="van Nimwegen E."/>
            <person name="Verardo R."/>
            <person name="Wei C.L."/>
            <person name="Yagi K."/>
            <person name="Yamanishi H."/>
            <person name="Zabarovsky E."/>
            <person name="Zhu S."/>
            <person name="Zimmer A."/>
            <person name="Hide W."/>
            <person name="Bult C."/>
            <person name="Grimmond S.M."/>
            <person name="Teasdale R.D."/>
            <person name="Liu E.T."/>
            <person name="Brusic V."/>
            <person name="Quackenbush J."/>
            <person name="Wahlestedt C."/>
            <person name="Mattick J.S."/>
            <person name="Hume D.A."/>
            <person name="Kai C."/>
            <person name="Sasaki D."/>
            <person name="Tomaru Y."/>
            <person name="Fukuda S."/>
            <person name="Kanamori-Katayama M."/>
            <person name="Suzuki M."/>
            <person name="Aoki J."/>
            <person name="Arakawa T."/>
            <person name="Iida J."/>
            <person name="Imamura K."/>
            <person name="Itoh M."/>
            <person name="Kato T."/>
            <person name="Kawaji H."/>
            <person name="Kawagashira N."/>
            <person name="Kawashima T."/>
            <person name="Kojima M."/>
            <person name="Kondo S."/>
            <person name="Konno H."/>
            <person name="Nakano K."/>
            <person name="Ninomiya N."/>
            <person name="Nishio T."/>
            <person name="Okada M."/>
            <person name="Plessy C."/>
            <person name="Shibata K."/>
            <person name="Shiraki T."/>
            <person name="Suzuki S."/>
            <person name="Tagami M."/>
            <person name="Waki K."/>
            <person name="Watahiki A."/>
            <person name="Okamura-Oho Y."/>
            <person name="Suzuki H."/>
            <person name="Kawai J."/>
            <person name="Hayashizaki Y."/>
        </authorList>
    </citation>
    <scope>NUCLEOTIDE SEQUENCE [LARGE SCALE MRNA]</scope>
    <source>
        <strain>C57BL/6J</strain>
        <tissue>B-cell</tissue>
        <tissue>Tongue</tissue>
    </source>
</reference>
<reference key="2">
    <citation type="journal article" date="2004" name="Genome Res.">
        <title>The status, quality, and expansion of the NIH full-length cDNA project: the Mammalian Gene Collection (MGC).</title>
        <authorList>
            <consortium name="The MGC Project Team"/>
        </authorList>
    </citation>
    <scope>NUCLEOTIDE SEQUENCE [LARGE SCALE MRNA]</scope>
    <source>
        <strain>FVB/N</strain>
        <tissue>Mammary tumor</tissue>
    </source>
</reference>
<evidence type="ECO:0000250" key="1"/>
<evidence type="ECO:0000255" key="2"/>
<evidence type="ECO:0000255" key="3">
    <source>
        <dbReference type="PROSITE-ProRule" id="PRU00114"/>
    </source>
</evidence>
<evidence type="ECO:0000305" key="4"/>
<protein>
    <recommendedName>
        <fullName>SLAM family member 9</fullName>
    </recommendedName>
</protein>
<accession>Q9D780</accession>
<accession>Q8BTK0</accession>
<accession>Q8VE93</accession>
<feature type="signal peptide" evidence="2">
    <location>
        <begin position="1"/>
        <end position="17"/>
    </location>
</feature>
<feature type="chain" id="PRO_0000042234" description="SLAM family member 9">
    <location>
        <begin position="18"/>
        <end position="285"/>
    </location>
</feature>
<feature type="topological domain" description="Extracellular" evidence="2">
    <location>
        <begin position="18"/>
        <end position="232"/>
    </location>
</feature>
<feature type="transmembrane region" description="Helical" evidence="2">
    <location>
        <begin position="233"/>
        <end position="253"/>
    </location>
</feature>
<feature type="topological domain" description="Cytoplasmic" evidence="2">
    <location>
        <begin position="254"/>
        <end position="285"/>
    </location>
</feature>
<feature type="domain" description="Ig-like V-type">
    <location>
        <begin position="25"/>
        <end position="126"/>
    </location>
</feature>
<feature type="domain" description="Ig-like C2-type">
    <location>
        <begin position="134"/>
        <end position="213"/>
    </location>
</feature>
<feature type="glycosylation site" description="N-linked (GlcNAc...) asparagine" evidence="2">
    <location>
        <position position="37"/>
    </location>
</feature>
<feature type="glycosylation site" description="N-linked (GlcNAc...) asparagine" evidence="2">
    <location>
        <position position="97"/>
    </location>
</feature>
<feature type="glycosylation site" description="N-linked (GlcNAc...) asparagine" evidence="2">
    <location>
        <position position="141"/>
    </location>
</feature>
<feature type="glycosylation site" description="N-linked (GlcNAc...) asparagine" evidence="2">
    <location>
        <position position="149"/>
    </location>
</feature>
<feature type="glycosylation site" description="N-linked (GlcNAc...) asparagine" evidence="2">
    <location>
        <position position="175"/>
    </location>
</feature>
<feature type="glycosylation site" description="N-linked (GlcNAc...) asparagine" evidence="2">
    <location>
        <position position="206"/>
    </location>
</feature>
<feature type="disulfide bond" evidence="3">
    <location>
        <begin position="154"/>
        <end position="198"/>
    </location>
</feature>
<feature type="sequence conflict" description="In Ref. 1; BAB26328." evidence="4" ref="1">
    <original>I</original>
    <variation>V</variation>
    <location>
        <position position="29"/>
    </location>
</feature>
<feature type="sequence conflict" description="In Ref. 2; AAH19477." evidence="4" ref="2">
    <original>M</original>
    <variation>T</variation>
    <location>
        <position position="74"/>
    </location>
</feature>
<feature type="sequence conflict" description="In Ref. 1; BAB26328." evidence="4" ref="1">
    <original>V</original>
    <variation>I</variation>
    <location>
        <position position="204"/>
    </location>
</feature>
<feature type="sequence conflict" description="In Ref. 1; BAC41061." evidence="4" ref="1">
    <original>R</original>
    <variation>H</variation>
    <location>
        <position position="210"/>
    </location>
</feature>
<feature type="sequence conflict" description="In Ref. 1; BAB26328." evidence="4" ref="1">
    <original>P</original>
    <variation>L</variation>
    <location>
        <position position="224"/>
    </location>
</feature>
<feature type="sequence conflict" description="In Ref. 1; BAC41061." evidence="4" ref="1">
    <original>R</original>
    <variation>W</variation>
    <location>
        <position position="263"/>
    </location>
</feature>
<feature type="sequence conflict" description="In Ref. 2; AAH19477." evidence="4" ref="2">
    <original>S</original>
    <variation>P</variation>
    <location>
        <position position="280"/>
    </location>
</feature>
<proteinExistence type="evidence at transcript level"/>
<gene>
    <name type="primary">Slamf9</name>
</gene>
<keyword id="KW-1015">Disulfide bond</keyword>
<keyword id="KW-0325">Glycoprotein</keyword>
<keyword id="KW-0393">Immunoglobulin domain</keyword>
<keyword id="KW-0472">Membrane</keyword>
<keyword id="KW-1185">Reference proteome</keyword>
<keyword id="KW-0732">Signal</keyword>
<keyword id="KW-0812">Transmembrane</keyword>
<keyword id="KW-1133">Transmembrane helix</keyword>
<name>SLAF9_MOUSE</name>
<organism>
    <name type="scientific">Mus musculus</name>
    <name type="common">Mouse</name>
    <dbReference type="NCBI Taxonomy" id="10090"/>
    <lineage>
        <taxon>Eukaryota</taxon>
        <taxon>Metazoa</taxon>
        <taxon>Chordata</taxon>
        <taxon>Craniata</taxon>
        <taxon>Vertebrata</taxon>
        <taxon>Euteleostomi</taxon>
        <taxon>Mammalia</taxon>
        <taxon>Eutheria</taxon>
        <taxon>Euarchontoglires</taxon>
        <taxon>Glires</taxon>
        <taxon>Rodentia</taxon>
        <taxon>Myomorpha</taxon>
        <taxon>Muroidea</taxon>
        <taxon>Muridae</taxon>
        <taxon>Murinae</taxon>
        <taxon>Mus</taxon>
        <taxon>Mus</taxon>
    </lineage>
</organism>
<sequence>MGALLWSLLLLLQEAKGFSGDDEDPEEVIGVLQESINLSLEIPSNEEIKHIDWLFQNNIAIVKPGKKGQPAVIMAVDPRYRGRVSISESSYSLHISNLTWEDSGLYNAQVNLKTSESHITKSYHLRVYRRLSKPHITVNSNISEEGVCNISLTCSIERAGMDVTYIWLSSQDSTNTSHEGSVLSTSWRPGDKAPSYTCRVSNPVSNISSRRISVGSFCADPGYPEKPSMLCLLVKSLFLLLLLAILTVGLCLFRAQKSYETPRVRKLKRNRIKLRKKGKSGPTPV</sequence>
<dbReference type="EMBL" id="AK009505">
    <property type="protein sequence ID" value="BAB26328.1"/>
    <property type="molecule type" value="mRNA"/>
</dbReference>
<dbReference type="EMBL" id="AK090041">
    <property type="protein sequence ID" value="BAC41061.1"/>
    <property type="molecule type" value="mRNA"/>
</dbReference>
<dbReference type="EMBL" id="BC019477">
    <property type="protein sequence ID" value="AAH19477.1"/>
    <property type="molecule type" value="mRNA"/>
</dbReference>
<dbReference type="CCDS" id="CCDS15514.1"/>
<dbReference type="RefSeq" id="NP_083888.3">
    <property type="nucleotide sequence ID" value="NM_029612.4"/>
</dbReference>
<dbReference type="RefSeq" id="XP_017168527.1">
    <property type="nucleotide sequence ID" value="XM_017313038.1"/>
</dbReference>
<dbReference type="SMR" id="Q9D780"/>
<dbReference type="FunCoup" id="Q9D780">
    <property type="interactions" value="613"/>
</dbReference>
<dbReference type="STRING" id="10090.ENSMUSP00000027830"/>
<dbReference type="GlyCosmos" id="Q9D780">
    <property type="glycosylation" value="6 sites, No reported glycans"/>
</dbReference>
<dbReference type="GlyGen" id="Q9D780">
    <property type="glycosylation" value="7 sites"/>
</dbReference>
<dbReference type="PaxDb" id="10090-ENSMUSP00000027830"/>
<dbReference type="ProteomicsDB" id="261416"/>
<dbReference type="ABCD" id="Q9D780">
    <property type="antibodies" value="15 sequenced antibodies"/>
</dbReference>
<dbReference type="DNASU" id="98365"/>
<dbReference type="GeneID" id="98365"/>
<dbReference type="KEGG" id="mmu:98365"/>
<dbReference type="UCSC" id="uc007dql.2">
    <property type="organism name" value="mouse"/>
</dbReference>
<dbReference type="AGR" id="MGI:1923692"/>
<dbReference type="CTD" id="89886"/>
<dbReference type="MGI" id="MGI:1923692">
    <property type="gene designation" value="Slamf9"/>
</dbReference>
<dbReference type="eggNOG" id="ENOG502SB7W">
    <property type="taxonomic scope" value="Eukaryota"/>
</dbReference>
<dbReference type="InParanoid" id="Q9D780"/>
<dbReference type="OrthoDB" id="9427418at2759"/>
<dbReference type="PhylomeDB" id="Q9D780"/>
<dbReference type="TreeFam" id="TF334964"/>
<dbReference type="BioGRID-ORCS" id="98365">
    <property type="hits" value="1 hit in 78 CRISPR screens"/>
</dbReference>
<dbReference type="PRO" id="PR:Q9D780"/>
<dbReference type="Proteomes" id="UP000000589">
    <property type="component" value="Unplaced"/>
</dbReference>
<dbReference type="RNAct" id="Q9D780">
    <property type="molecule type" value="protein"/>
</dbReference>
<dbReference type="GO" id="GO:0009986">
    <property type="term" value="C:cell surface"/>
    <property type="evidence" value="ECO:0000314"/>
    <property type="project" value="MGI"/>
</dbReference>
<dbReference type="GO" id="GO:0016020">
    <property type="term" value="C:membrane"/>
    <property type="evidence" value="ECO:0007669"/>
    <property type="project" value="UniProtKB-SubCell"/>
</dbReference>
<dbReference type="GO" id="GO:0042742">
    <property type="term" value="P:defense response to bacterium"/>
    <property type="evidence" value="ECO:0000315"/>
    <property type="project" value="MGI"/>
</dbReference>
<dbReference type="GO" id="GO:0002410">
    <property type="term" value="P:plasmacytoid dendritic cell chemotaxis"/>
    <property type="evidence" value="ECO:0000315"/>
    <property type="project" value="MGI"/>
</dbReference>
<dbReference type="GO" id="GO:0002273">
    <property type="term" value="P:plasmacytoid dendritic cell differentiation"/>
    <property type="evidence" value="ECO:0000315"/>
    <property type="project" value="MGI"/>
</dbReference>
<dbReference type="CDD" id="cd16842">
    <property type="entry name" value="Ig_SLAM-like_N"/>
    <property type="match status" value="1"/>
</dbReference>
<dbReference type="Gene3D" id="2.60.40.10">
    <property type="entry name" value="Immunoglobulins"/>
    <property type="match status" value="2"/>
</dbReference>
<dbReference type="InterPro" id="IPR015631">
    <property type="entry name" value="CD2/SLAM_rcpt"/>
</dbReference>
<dbReference type="InterPro" id="IPR007110">
    <property type="entry name" value="Ig-like_dom"/>
</dbReference>
<dbReference type="InterPro" id="IPR036179">
    <property type="entry name" value="Ig-like_dom_sf"/>
</dbReference>
<dbReference type="InterPro" id="IPR013783">
    <property type="entry name" value="Ig-like_fold"/>
</dbReference>
<dbReference type="InterPro" id="IPR003599">
    <property type="entry name" value="Ig_sub"/>
</dbReference>
<dbReference type="InterPro" id="IPR013106">
    <property type="entry name" value="Ig_V-set"/>
</dbReference>
<dbReference type="PANTHER" id="PTHR12080">
    <property type="entry name" value="SIGNALING LYMPHOCYTIC ACTIVATION MOLECULE"/>
    <property type="match status" value="1"/>
</dbReference>
<dbReference type="PANTHER" id="PTHR12080:SF18">
    <property type="entry name" value="SLAM FAMILY MEMBER 9"/>
    <property type="match status" value="1"/>
</dbReference>
<dbReference type="Pfam" id="PF07686">
    <property type="entry name" value="V-set"/>
    <property type="match status" value="1"/>
</dbReference>
<dbReference type="SMART" id="SM00409">
    <property type="entry name" value="IG"/>
    <property type="match status" value="1"/>
</dbReference>
<dbReference type="SUPFAM" id="SSF48726">
    <property type="entry name" value="Immunoglobulin"/>
    <property type="match status" value="2"/>
</dbReference>
<dbReference type="PROSITE" id="PS50835">
    <property type="entry name" value="IG_LIKE"/>
    <property type="match status" value="1"/>
</dbReference>